<gene>
    <name type="primary">DEFB136</name>
</gene>
<reference key="1">
    <citation type="journal article" date="2005" name="Physiol. Genomics">
        <title>Cross-species analysis of the mammalian beta-defensin gene family: presence of syntenic gene clusters and preferential expression in the male reproductive tract.</title>
        <authorList>
            <person name="Patil A.A."/>
            <person name="Cai Y."/>
            <person name="Sang Y."/>
            <person name="Blecha F."/>
            <person name="Zhang G."/>
        </authorList>
    </citation>
    <scope>NUCLEOTIDE SEQUENCE [MRNA]</scope>
</reference>
<comment type="function">
    <text evidence="3">Host defense peptide that exhibits antimicrobial and antifungal activity (By similarity). Exhibits antimicrobial activity against E.coli, S.aureus and C.albicans (in vitro) (By similarity). Has high lipopolysaccharide (LPS)-binding affinity, and may thereby be involved in immunoregulation through LPS neutralization (By similarity).</text>
</comment>
<comment type="subcellular location">
    <subcellularLocation>
        <location evidence="1">Secreted</location>
    </subcellularLocation>
</comment>
<comment type="similarity">
    <text evidence="6">Belongs to the beta-defensin family.</text>
</comment>
<sequence length="78" mass="8788">MNLCLSSLLFFLVILLPSGKGMFGNDGVKVRTCTSQKAVCFFGCPPGYRWIAFCHNILSCCKNMTRFQPLQAKDPWVH</sequence>
<dbReference type="EMBL" id="DQ012087">
    <property type="protein sequence ID" value="AAY59817.1"/>
    <property type="molecule type" value="mRNA"/>
</dbReference>
<dbReference type="RefSeq" id="NP_001123266.1">
    <property type="nucleotide sequence ID" value="NM_001129794.1"/>
</dbReference>
<dbReference type="SMR" id="Q30KJ3"/>
<dbReference type="FunCoup" id="Q30KJ3">
    <property type="interactions" value="1"/>
</dbReference>
<dbReference type="STRING" id="9598.ENSPTRP00000053236"/>
<dbReference type="PaxDb" id="9598-ENSPTRP00000053236"/>
<dbReference type="Ensembl" id="ENSPTRT00000059955.2">
    <property type="protein sequence ID" value="ENSPTRP00000053236.1"/>
    <property type="gene ID" value="ENSPTRG00000031029.2"/>
</dbReference>
<dbReference type="GeneID" id="738108"/>
<dbReference type="KEGG" id="ptr:738108"/>
<dbReference type="CTD" id="613210"/>
<dbReference type="VGNC" id="VGNC:3023">
    <property type="gene designation" value="DEFB136"/>
</dbReference>
<dbReference type="eggNOG" id="ENOG502R7G8">
    <property type="taxonomic scope" value="Eukaryota"/>
</dbReference>
<dbReference type="GeneTree" id="ENSGT00390000001862"/>
<dbReference type="HOGENOM" id="CLU_198474_0_0_1"/>
<dbReference type="InParanoid" id="Q30KJ3"/>
<dbReference type="OMA" id="WVAFCHN"/>
<dbReference type="OrthoDB" id="6895at9604"/>
<dbReference type="TreeFam" id="TF343350"/>
<dbReference type="Proteomes" id="UP000002277">
    <property type="component" value="Chromosome 8"/>
</dbReference>
<dbReference type="Bgee" id="ENSPTRG00000031029">
    <property type="expression patterns" value="Expressed in cerebellar cortex and 5 other cell types or tissues"/>
</dbReference>
<dbReference type="GO" id="GO:0005576">
    <property type="term" value="C:extracellular region"/>
    <property type="evidence" value="ECO:0007669"/>
    <property type="project" value="UniProtKB-SubCell"/>
</dbReference>
<dbReference type="GO" id="GO:0001530">
    <property type="term" value="F:lipopolysaccharide binding"/>
    <property type="evidence" value="ECO:0000250"/>
    <property type="project" value="UniProtKB"/>
</dbReference>
<dbReference type="GO" id="GO:0140367">
    <property type="term" value="P:antibacterial innate immune response"/>
    <property type="evidence" value="ECO:0000250"/>
    <property type="project" value="UniProtKB"/>
</dbReference>
<dbReference type="GO" id="GO:0061760">
    <property type="term" value="P:antifungal innate immune response"/>
    <property type="evidence" value="ECO:0000250"/>
    <property type="project" value="UniProtKB"/>
</dbReference>
<dbReference type="GO" id="GO:0050829">
    <property type="term" value="P:defense response to Gram-negative bacterium"/>
    <property type="evidence" value="ECO:0000250"/>
    <property type="project" value="UniProtKB"/>
</dbReference>
<dbReference type="GO" id="GO:0050830">
    <property type="term" value="P:defense response to Gram-positive bacterium"/>
    <property type="evidence" value="ECO:0000250"/>
    <property type="project" value="UniProtKB"/>
</dbReference>
<dbReference type="GO" id="GO:0031640">
    <property type="term" value="P:killing of cells of another organism"/>
    <property type="evidence" value="ECO:0007669"/>
    <property type="project" value="UniProtKB-KW"/>
</dbReference>
<dbReference type="InterPro" id="IPR035307">
    <property type="entry name" value="DEFB136/42"/>
</dbReference>
<dbReference type="PANTHER" id="PTHR39413">
    <property type="entry name" value="BETA-DEFENSIN 136"/>
    <property type="match status" value="1"/>
</dbReference>
<dbReference type="PANTHER" id="PTHR39413:SF1">
    <property type="entry name" value="DEFENSIN BETA 136"/>
    <property type="match status" value="1"/>
</dbReference>
<dbReference type="Pfam" id="PF17333">
    <property type="entry name" value="DEFB136"/>
    <property type="match status" value="1"/>
</dbReference>
<dbReference type="SUPFAM" id="SSF57392">
    <property type="entry name" value="Defensin-like"/>
    <property type="match status" value="1"/>
</dbReference>
<accession>Q30KJ3</accession>
<evidence type="ECO:0000250" key="1">
    <source>
        <dbReference type="UniProtKB" id="P60022"/>
    </source>
</evidence>
<evidence type="ECO:0000250" key="2">
    <source>
        <dbReference type="UniProtKB" id="P81534"/>
    </source>
</evidence>
<evidence type="ECO:0000250" key="3">
    <source>
        <dbReference type="UniProtKB" id="Q30KP8"/>
    </source>
</evidence>
<evidence type="ECO:0000255" key="4"/>
<evidence type="ECO:0000303" key="5">
    <source>
    </source>
</evidence>
<evidence type="ECO:0000305" key="6"/>
<keyword id="KW-0044">Antibiotic</keyword>
<keyword id="KW-0929">Antimicrobial</keyword>
<keyword id="KW-0211">Defensin</keyword>
<keyword id="KW-1015">Disulfide bond</keyword>
<keyword id="KW-0295">Fungicide</keyword>
<keyword id="KW-1185">Reference proteome</keyword>
<keyword id="KW-0964">Secreted</keyword>
<keyword id="KW-0732">Signal</keyword>
<feature type="signal peptide" evidence="4">
    <location>
        <begin position="1"/>
        <end position="21"/>
    </location>
</feature>
<feature type="chain" id="PRO_0000045365" description="Defensin beta 136">
    <location>
        <begin position="22"/>
        <end position="78"/>
    </location>
</feature>
<feature type="disulfide bond" evidence="2">
    <location>
        <begin position="33"/>
        <end position="60"/>
    </location>
</feature>
<feature type="disulfide bond" evidence="2">
    <location>
        <begin position="40"/>
        <end position="54"/>
    </location>
</feature>
<feature type="disulfide bond" evidence="2">
    <location>
        <begin position="44"/>
        <end position="61"/>
    </location>
</feature>
<name>DB136_PANTR</name>
<proteinExistence type="inferred from homology"/>
<organism>
    <name type="scientific">Pan troglodytes</name>
    <name type="common">Chimpanzee</name>
    <dbReference type="NCBI Taxonomy" id="9598"/>
    <lineage>
        <taxon>Eukaryota</taxon>
        <taxon>Metazoa</taxon>
        <taxon>Chordata</taxon>
        <taxon>Craniata</taxon>
        <taxon>Vertebrata</taxon>
        <taxon>Euteleostomi</taxon>
        <taxon>Mammalia</taxon>
        <taxon>Eutheria</taxon>
        <taxon>Euarchontoglires</taxon>
        <taxon>Primates</taxon>
        <taxon>Haplorrhini</taxon>
        <taxon>Catarrhini</taxon>
        <taxon>Hominidae</taxon>
        <taxon>Pan</taxon>
    </lineage>
</organism>
<protein>
    <recommendedName>
        <fullName evidence="3">Defensin beta 136</fullName>
    </recommendedName>
    <alternativeName>
        <fullName evidence="5">Beta-defensin 136</fullName>
    </alternativeName>
</protein>